<reference key="1">
    <citation type="submission" date="2006-10" db="EMBL/GenBank/DDBJ databases">
        <title>Complete sequence of Syntrophobacter fumaroxidans MPOB.</title>
        <authorList>
            <consortium name="US DOE Joint Genome Institute"/>
            <person name="Copeland A."/>
            <person name="Lucas S."/>
            <person name="Lapidus A."/>
            <person name="Barry K."/>
            <person name="Detter J.C."/>
            <person name="Glavina del Rio T."/>
            <person name="Hammon N."/>
            <person name="Israni S."/>
            <person name="Pitluck S."/>
            <person name="Goltsman E.G."/>
            <person name="Martinez M."/>
            <person name="Schmutz J."/>
            <person name="Larimer F."/>
            <person name="Land M."/>
            <person name="Hauser L."/>
            <person name="Kyrpides N."/>
            <person name="Kim E."/>
            <person name="Boone D.R."/>
            <person name="Brockman F."/>
            <person name="Culley D."/>
            <person name="Ferry J."/>
            <person name="Gunsalus R."/>
            <person name="McInerney M.J."/>
            <person name="Morrison M."/>
            <person name="Plugge C."/>
            <person name="Rohlin L."/>
            <person name="Scholten J."/>
            <person name="Sieber J."/>
            <person name="Stams A.J.M."/>
            <person name="Worm P."/>
            <person name="Henstra A.M."/>
            <person name="Richardson P."/>
        </authorList>
    </citation>
    <scope>NUCLEOTIDE SEQUENCE [LARGE SCALE GENOMIC DNA]</scope>
    <source>
        <strain>DSM 10017 / MPOB</strain>
    </source>
</reference>
<evidence type="ECO:0000255" key="1">
    <source>
        <dbReference type="HAMAP-Rule" id="MF_00406"/>
    </source>
</evidence>
<feature type="chain" id="PRO_0000340812" description="3-hydroxyacyl-[acyl-carrier-protein] dehydratase FabZ">
    <location>
        <begin position="1"/>
        <end position="147"/>
    </location>
</feature>
<feature type="active site" evidence="1">
    <location>
        <position position="46"/>
    </location>
</feature>
<proteinExistence type="inferred from homology"/>
<gene>
    <name evidence="1" type="primary">fabZ</name>
    <name type="ordered locus">Sfum_3748</name>
</gene>
<comment type="function">
    <text evidence="1">Involved in unsaturated fatty acids biosynthesis. Catalyzes the dehydration of short chain beta-hydroxyacyl-ACPs and long chain saturated and unsaturated beta-hydroxyacyl-ACPs.</text>
</comment>
<comment type="catalytic activity">
    <reaction evidence="1">
        <text>a (3R)-hydroxyacyl-[ACP] = a (2E)-enoyl-[ACP] + H2O</text>
        <dbReference type="Rhea" id="RHEA:13097"/>
        <dbReference type="Rhea" id="RHEA-COMP:9925"/>
        <dbReference type="Rhea" id="RHEA-COMP:9945"/>
        <dbReference type="ChEBI" id="CHEBI:15377"/>
        <dbReference type="ChEBI" id="CHEBI:78784"/>
        <dbReference type="ChEBI" id="CHEBI:78827"/>
        <dbReference type="EC" id="4.2.1.59"/>
    </reaction>
</comment>
<comment type="subcellular location">
    <subcellularLocation>
        <location evidence="1">Cytoplasm</location>
    </subcellularLocation>
</comment>
<comment type="similarity">
    <text evidence="1">Belongs to the thioester dehydratase family. FabZ subfamily.</text>
</comment>
<name>FABZ_SYNFM</name>
<sequence length="147" mass="16459">MDIAKIMGYLPHRYPFLLVDRILELTSEEIVGLKNVTINEPFFQGHFPGEPIMPGVLIIEALAQTGGVLAFTLVSDFRGKPIYFMGMDKVRFRKPVRPGDQLILKLKILKRRGPTFKMSAEAFVEEQLVAEAELLATIGAAKSEREA</sequence>
<organism>
    <name type="scientific">Syntrophobacter fumaroxidans (strain DSM 10017 / MPOB)</name>
    <dbReference type="NCBI Taxonomy" id="335543"/>
    <lineage>
        <taxon>Bacteria</taxon>
        <taxon>Pseudomonadati</taxon>
        <taxon>Thermodesulfobacteriota</taxon>
        <taxon>Syntrophobacteria</taxon>
        <taxon>Syntrophobacterales</taxon>
        <taxon>Syntrophobacteraceae</taxon>
        <taxon>Syntrophobacter</taxon>
    </lineage>
</organism>
<dbReference type="EC" id="4.2.1.59" evidence="1"/>
<dbReference type="EMBL" id="CP000478">
    <property type="protein sequence ID" value="ABK19418.1"/>
    <property type="molecule type" value="Genomic_DNA"/>
</dbReference>
<dbReference type="RefSeq" id="WP_011700543.1">
    <property type="nucleotide sequence ID" value="NC_008554.1"/>
</dbReference>
<dbReference type="SMR" id="A0LPR6"/>
<dbReference type="FunCoup" id="A0LPR6">
    <property type="interactions" value="447"/>
</dbReference>
<dbReference type="STRING" id="335543.Sfum_3748"/>
<dbReference type="KEGG" id="sfu:Sfum_3748"/>
<dbReference type="eggNOG" id="COG0764">
    <property type="taxonomic scope" value="Bacteria"/>
</dbReference>
<dbReference type="HOGENOM" id="CLU_078912_1_2_7"/>
<dbReference type="InParanoid" id="A0LPR6"/>
<dbReference type="OrthoDB" id="9772788at2"/>
<dbReference type="Proteomes" id="UP000001784">
    <property type="component" value="Chromosome"/>
</dbReference>
<dbReference type="GO" id="GO:0005737">
    <property type="term" value="C:cytoplasm"/>
    <property type="evidence" value="ECO:0007669"/>
    <property type="project" value="UniProtKB-SubCell"/>
</dbReference>
<dbReference type="GO" id="GO:0016020">
    <property type="term" value="C:membrane"/>
    <property type="evidence" value="ECO:0007669"/>
    <property type="project" value="GOC"/>
</dbReference>
<dbReference type="GO" id="GO:0019171">
    <property type="term" value="F:(3R)-hydroxyacyl-[acyl-carrier-protein] dehydratase activity"/>
    <property type="evidence" value="ECO:0007669"/>
    <property type="project" value="UniProtKB-EC"/>
</dbReference>
<dbReference type="GO" id="GO:0006633">
    <property type="term" value="P:fatty acid biosynthetic process"/>
    <property type="evidence" value="ECO:0007669"/>
    <property type="project" value="UniProtKB-UniRule"/>
</dbReference>
<dbReference type="GO" id="GO:0009245">
    <property type="term" value="P:lipid A biosynthetic process"/>
    <property type="evidence" value="ECO:0007669"/>
    <property type="project" value="UniProtKB-UniRule"/>
</dbReference>
<dbReference type="CDD" id="cd01288">
    <property type="entry name" value="FabZ"/>
    <property type="match status" value="1"/>
</dbReference>
<dbReference type="FunFam" id="3.10.129.10:FF:000001">
    <property type="entry name" value="3-hydroxyacyl-[acyl-carrier-protein] dehydratase FabZ"/>
    <property type="match status" value="1"/>
</dbReference>
<dbReference type="Gene3D" id="3.10.129.10">
    <property type="entry name" value="Hotdog Thioesterase"/>
    <property type="match status" value="1"/>
</dbReference>
<dbReference type="HAMAP" id="MF_00406">
    <property type="entry name" value="FabZ"/>
    <property type="match status" value="1"/>
</dbReference>
<dbReference type="InterPro" id="IPR013114">
    <property type="entry name" value="FabA_FabZ"/>
</dbReference>
<dbReference type="InterPro" id="IPR010084">
    <property type="entry name" value="FabZ"/>
</dbReference>
<dbReference type="InterPro" id="IPR029069">
    <property type="entry name" value="HotDog_dom_sf"/>
</dbReference>
<dbReference type="NCBIfam" id="TIGR01750">
    <property type="entry name" value="fabZ"/>
    <property type="match status" value="1"/>
</dbReference>
<dbReference type="NCBIfam" id="NF000582">
    <property type="entry name" value="PRK00006.1"/>
    <property type="match status" value="1"/>
</dbReference>
<dbReference type="PANTHER" id="PTHR30272">
    <property type="entry name" value="3-HYDROXYACYL-[ACYL-CARRIER-PROTEIN] DEHYDRATASE"/>
    <property type="match status" value="1"/>
</dbReference>
<dbReference type="PANTHER" id="PTHR30272:SF1">
    <property type="entry name" value="3-HYDROXYACYL-[ACYL-CARRIER-PROTEIN] DEHYDRATASE"/>
    <property type="match status" value="1"/>
</dbReference>
<dbReference type="Pfam" id="PF07977">
    <property type="entry name" value="FabA"/>
    <property type="match status" value="1"/>
</dbReference>
<dbReference type="SUPFAM" id="SSF54637">
    <property type="entry name" value="Thioesterase/thiol ester dehydrase-isomerase"/>
    <property type="match status" value="1"/>
</dbReference>
<accession>A0LPR6</accession>
<keyword id="KW-0963">Cytoplasm</keyword>
<keyword id="KW-0441">Lipid A biosynthesis</keyword>
<keyword id="KW-0444">Lipid biosynthesis</keyword>
<keyword id="KW-0443">Lipid metabolism</keyword>
<keyword id="KW-0456">Lyase</keyword>
<keyword id="KW-1185">Reference proteome</keyword>
<protein>
    <recommendedName>
        <fullName evidence="1">3-hydroxyacyl-[acyl-carrier-protein] dehydratase FabZ</fullName>
        <ecNumber evidence="1">4.2.1.59</ecNumber>
    </recommendedName>
    <alternativeName>
        <fullName evidence="1">(3R)-hydroxymyristoyl-[acyl-carrier-protein] dehydratase</fullName>
        <shortName evidence="1">(3R)-hydroxymyristoyl-ACP dehydrase</shortName>
    </alternativeName>
    <alternativeName>
        <fullName evidence="1">Beta-hydroxyacyl-ACP dehydratase</fullName>
    </alternativeName>
</protein>